<proteinExistence type="inferred from homology"/>
<dbReference type="EC" id="2.1.3.3" evidence="2"/>
<dbReference type="EMBL" id="BA000023">
    <property type="protein sequence ID" value="BAB66286.1"/>
    <property type="molecule type" value="Genomic_DNA"/>
</dbReference>
<dbReference type="RefSeq" id="WP_010979264.1">
    <property type="nucleotide sequence ID" value="NC_003106.2"/>
</dbReference>
<dbReference type="SMR" id="Q971Y3"/>
<dbReference type="STRING" id="273063.STK_12450"/>
<dbReference type="GeneID" id="1459243"/>
<dbReference type="KEGG" id="sto:STK_12450"/>
<dbReference type="PATRIC" id="fig|273063.9.peg.1405"/>
<dbReference type="eggNOG" id="arCOG00912">
    <property type="taxonomic scope" value="Archaea"/>
</dbReference>
<dbReference type="OrthoDB" id="4696at2157"/>
<dbReference type="UniPathway" id="UPA00068">
    <property type="reaction ID" value="UER00112"/>
</dbReference>
<dbReference type="Proteomes" id="UP000001015">
    <property type="component" value="Chromosome"/>
</dbReference>
<dbReference type="GO" id="GO:0005737">
    <property type="term" value="C:cytoplasm"/>
    <property type="evidence" value="ECO:0007669"/>
    <property type="project" value="UniProtKB-SubCell"/>
</dbReference>
<dbReference type="GO" id="GO:0016597">
    <property type="term" value="F:amino acid binding"/>
    <property type="evidence" value="ECO:0007669"/>
    <property type="project" value="InterPro"/>
</dbReference>
<dbReference type="GO" id="GO:0004585">
    <property type="term" value="F:ornithine carbamoyltransferase activity"/>
    <property type="evidence" value="ECO:0007669"/>
    <property type="project" value="UniProtKB-UniRule"/>
</dbReference>
<dbReference type="GO" id="GO:0042450">
    <property type="term" value="P:arginine biosynthetic process via ornithine"/>
    <property type="evidence" value="ECO:0007669"/>
    <property type="project" value="TreeGrafter"/>
</dbReference>
<dbReference type="GO" id="GO:0019240">
    <property type="term" value="P:citrulline biosynthetic process"/>
    <property type="evidence" value="ECO:0007669"/>
    <property type="project" value="TreeGrafter"/>
</dbReference>
<dbReference type="GO" id="GO:0006526">
    <property type="term" value="P:L-arginine biosynthetic process"/>
    <property type="evidence" value="ECO:0007669"/>
    <property type="project" value="UniProtKB-UniRule"/>
</dbReference>
<dbReference type="FunFam" id="3.40.50.1370:FF:000008">
    <property type="entry name" value="Ornithine carbamoyltransferase"/>
    <property type="match status" value="1"/>
</dbReference>
<dbReference type="Gene3D" id="3.40.50.1370">
    <property type="entry name" value="Aspartate/ornithine carbamoyltransferase"/>
    <property type="match status" value="2"/>
</dbReference>
<dbReference type="HAMAP" id="MF_01109">
    <property type="entry name" value="OTCase"/>
    <property type="match status" value="1"/>
</dbReference>
<dbReference type="InterPro" id="IPR006132">
    <property type="entry name" value="Asp/Orn_carbamoyltranf_P-bd"/>
</dbReference>
<dbReference type="InterPro" id="IPR006130">
    <property type="entry name" value="Asp/Orn_carbamoylTrfase"/>
</dbReference>
<dbReference type="InterPro" id="IPR036901">
    <property type="entry name" value="Asp/Orn_carbamoylTrfase_sf"/>
</dbReference>
<dbReference type="InterPro" id="IPR006131">
    <property type="entry name" value="Asp_carbamoyltransf_Asp/Orn-bd"/>
</dbReference>
<dbReference type="InterPro" id="IPR002292">
    <property type="entry name" value="Orn/put_carbamltrans"/>
</dbReference>
<dbReference type="InterPro" id="IPR024904">
    <property type="entry name" value="OTCase_ArgI"/>
</dbReference>
<dbReference type="NCBIfam" id="TIGR00658">
    <property type="entry name" value="orni_carb_tr"/>
    <property type="match status" value="1"/>
</dbReference>
<dbReference type="NCBIfam" id="NF001986">
    <property type="entry name" value="PRK00779.1"/>
    <property type="match status" value="1"/>
</dbReference>
<dbReference type="PANTHER" id="PTHR45753">
    <property type="entry name" value="ORNITHINE CARBAMOYLTRANSFERASE, MITOCHONDRIAL"/>
    <property type="match status" value="1"/>
</dbReference>
<dbReference type="PANTHER" id="PTHR45753:SF3">
    <property type="entry name" value="ORNITHINE TRANSCARBAMYLASE, MITOCHONDRIAL"/>
    <property type="match status" value="1"/>
</dbReference>
<dbReference type="Pfam" id="PF00185">
    <property type="entry name" value="OTCace"/>
    <property type="match status" value="1"/>
</dbReference>
<dbReference type="Pfam" id="PF02729">
    <property type="entry name" value="OTCace_N"/>
    <property type="match status" value="1"/>
</dbReference>
<dbReference type="PRINTS" id="PR00100">
    <property type="entry name" value="AOTCASE"/>
</dbReference>
<dbReference type="PRINTS" id="PR00102">
    <property type="entry name" value="OTCASE"/>
</dbReference>
<dbReference type="SUPFAM" id="SSF53671">
    <property type="entry name" value="Aspartate/ornithine carbamoyltransferase"/>
    <property type="match status" value="1"/>
</dbReference>
<dbReference type="PROSITE" id="PS00097">
    <property type="entry name" value="CARBAMOYLTRANSFERASE"/>
    <property type="match status" value="1"/>
</dbReference>
<protein>
    <recommendedName>
        <fullName evidence="2">Ornithine carbamoyltransferase</fullName>
        <shortName evidence="2">OTCase</shortName>
        <ecNumber evidence="2">2.1.3.3</ecNumber>
    </recommendedName>
</protein>
<comment type="function">
    <text evidence="1">Reversibly catalyzes the transfer of the carbamoyl group from carbamoyl phosphate (CP) to the N(epsilon) atom of ornithine (ORN) to produce L-citrulline.</text>
</comment>
<comment type="catalytic activity">
    <reaction evidence="2">
        <text>carbamoyl phosphate + L-ornithine = L-citrulline + phosphate + H(+)</text>
        <dbReference type="Rhea" id="RHEA:19513"/>
        <dbReference type="ChEBI" id="CHEBI:15378"/>
        <dbReference type="ChEBI" id="CHEBI:43474"/>
        <dbReference type="ChEBI" id="CHEBI:46911"/>
        <dbReference type="ChEBI" id="CHEBI:57743"/>
        <dbReference type="ChEBI" id="CHEBI:58228"/>
        <dbReference type="EC" id="2.1.3.3"/>
    </reaction>
</comment>
<comment type="pathway">
    <text evidence="2">Amino-acid biosynthesis; L-arginine biosynthesis; L-arginine from L-ornithine and carbamoyl phosphate: step 1/3.</text>
</comment>
<comment type="subcellular location">
    <subcellularLocation>
        <location evidence="2">Cytoplasm</location>
    </subcellularLocation>
</comment>
<comment type="similarity">
    <text evidence="2">Belongs to the aspartate/ornithine carbamoyltransferase superfamily. OTCase family.</text>
</comment>
<gene>
    <name evidence="2" type="primary">argF</name>
    <name type="ordered locus">STK_12450</name>
</gene>
<evidence type="ECO:0000250" key="1"/>
<evidence type="ECO:0000255" key="2">
    <source>
        <dbReference type="HAMAP-Rule" id="MF_01109"/>
    </source>
</evidence>
<keyword id="KW-0028">Amino-acid biosynthesis</keyword>
<keyword id="KW-0055">Arginine biosynthesis</keyword>
<keyword id="KW-0963">Cytoplasm</keyword>
<keyword id="KW-1185">Reference proteome</keyword>
<keyword id="KW-0808">Transferase</keyword>
<accession>Q971Y3</accession>
<organism>
    <name type="scientific">Sulfurisphaera tokodaii (strain DSM 16993 / JCM 10545 / NBRC 100140 / 7)</name>
    <name type="common">Sulfolobus tokodaii</name>
    <dbReference type="NCBI Taxonomy" id="273063"/>
    <lineage>
        <taxon>Archaea</taxon>
        <taxon>Thermoproteota</taxon>
        <taxon>Thermoprotei</taxon>
        <taxon>Sulfolobales</taxon>
        <taxon>Sulfolobaceae</taxon>
        <taxon>Sulfurisphaera</taxon>
    </lineage>
</organism>
<feature type="chain" id="PRO_0000113078" description="Ornithine carbamoyltransferase">
    <location>
        <begin position="1"/>
        <end position="306"/>
    </location>
</feature>
<feature type="binding site" evidence="2">
    <location>
        <begin position="54"/>
        <end position="57"/>
    </location>
    <ligand>
        <name>carbamoyl phosphate</name>
        <dbReference type="ChEBI" id="CHEBI:58228"/>
    </ligand>
</feature>
<feature type="binding site" evidence="2">
    <location>
        <position position="81"/>
    </location>
    <ligand>
        <name>carbamoyl phosphate</name>
        <dbReference type="ChEBI" id="CHEBI:58228"/>
    </ligand>
</feature>
<feature type="binding site" evidence="2">
    <location>
        <position position="105"/>
    </location>
    <ligand>
        <name>carbamoyl phosphate</name>
        <dbReference type="ChEBI" id="CHEBI:58228"/>
    </ligand>
</feature>
<feature type="binding site" evidence="2">
    <location>
        <begin position="132"/>
        <end position="135"/>
    </location>
    <ligand>
        <name>carbamoyl phosphate</name>
        <dbReference type="ChEBI" id="CHEBI:58228"/>
    </ligand>
</feature>
<feature type="binding site" evidence="2">
    <location>
        <position position="162"/>
    </location>
    <ligand>
        <name>L-ornithine</name>
        <dbReference type="ChEBI" id="CHEBI:46911"/>
    </ligand>
</feature>
<feature type="binding site" evidence="2">
    <location>
        <position position="226"/>
    </location>
    <ligand>
        <name>L-ornithine</name>
        <dbReference type="ChEBI" id="CHEBI:46911"/>
    </ligand>
</feature>
<feature type="binding site" evidence="2">
    <location>
        <begin position="230"/>
        <end position="231"/>
    </location>
    <ligand>
        <name>L-ornithine</name>
        <dbReference type="ChEBI" id="CHEBI:46911"/>
    </ligand>
</feature>
<feature type="binding site" evidence="2">
    <location>
        <begin position="266"/>
        <end position="267"/>
    </location>
    <ligand>
        <name>carbamoyl phosphate</name>
        <dbReference type="ChEBI" id="CHEBI:58228"/>
    </ligand>
</feature>
<feature type="binding site" evidence="2">
    <location>
        <position position="294"/>
    </location>
    <ligand>
        <name>carbamoyl phosphate</name>
        <dbReference type="ChEBI" id="CHEBI:58228"/>
    </ligand>
</feature>
<sequence length="306" mass="34511">MLKGKSLLCLLDFSKQEIEKMMEVSFQMKNFHMLRSVPRSLDGKTVAMLFEKPSTRTRVSFETAIRLLGGNPIVLNKSDIQLSRGEPVEDTARVLGRFVDGIAARVLKHETLELLAKYSNKPTINLLSDLSHPLQALADFMTIKEKFGEYTSLTFVGDGGDNVLVSLMAFVAKMGLEIKIASPKEFKPRDDIMKRIEEEAEKSGAIIEFYEDPYEAVRGSKVVYTDVWVSMGQESIAEKKKELLRNYRVSVDLMRYASKDAIFMHCLPAVRGEEVENEVIDGPKSAVWDQAENRLYTAMSVLSLLL</sequence>
<reference key="1">
    <citation type="journal article" date="2001" name="DNA Res.">
        <title>Complete genome sequence of an aerobic thermoacidophilic Crenarchaeon, Sulfolobus tokodaii strain7.</title>
        <authorList>
            <person name="Kawarabayasi Y."/>
            <person name="Hino Y."/>
            <person name="Horikawa H."/>
            <person name="Jin-no K."/>
            <person name="Takahashi M."/>
            <person name="Sekine M."/>
            <person name="Baba S."/>
            <person name="Ankai A."/>
            <person name="Kosugi H."/>
            <person name="Hosoyama A."/>
            <person name="Fukui S."/>
            <person name="Nagai Y."/>
            <person name="Nishijima K."/>
            <person name="Otsuka R."/>
            <person name="Nakazawa H."/>
            <person name="Takamiya M."/>
            <person name="Kato Y."/>
            <person name="Yoshizawa T."/>
            <person name="Tanaka T."/>
            <person name="Kudoh Y."/>
            <person name="Yamazaki J."/>
            <person name="Kushida N."/>
            <person name="Oguchi A."/>
            <person name="Aoki K."/>
            <person name="Masuda S."/>
            <person name="Yanagii M."/>
            <person name="Nishimura M."/>
            <person name="Yamagishi A."/>
            <person name="Oshima T."/>
            <person name="Kikuchi H."/>
        </authorList>
    </citation>
    <scope>NUCLEOTIDE SEQUENCE [LARGE SCALE GENOMIC DNA]</scope>
    <source>
        <strain>DSM 16993 / JCM 10545 / NBRC 100140 / 7</strain>
    </source>
</reference>
<name>OTC_SULTO</name>